<sequence>MGKIKPDEIRSIIKQQIQQYQQEVASVTIGTVFQVGDGIAHIYGLDDVMAGELLEFQDNTIGIALNLETKSVGVVLMGDGTTIQEGSFVRATGKIAQIPVGAAFLGRVVNPLALPIDGKGEIKSDINRIIESPAPGIICRRSIHEPLQTGILAIDSMIPIGRGQRELIIGDRQTGKTAICIDTIINQKGKNIVCVYVAIGQKASSIAQVVNILQERGALEYTIIVAATADSPATLQYLAPYAGATLAEFFMYNGQHTLIIYDDLTKQAQAYREISLLLRRPPGREAYPGDVFYLHSRLLERAAKLNEKLGGGSMTALPVVETQEGDISAYIPTNVISITDGQIFLSADLFNANVRPAINVGVSVSRVGSAAQPKAMKQVAGKLKLELAQFAELEAFSQFASDLDQSTQKQLARGQRLRELLKQVQHSPLNLENQVSAIFAGTHGYLDVISIEHIPIFLVGLWQHLVNHKPKYGEILNSTNTFSEEAQAILIESLKYLTEEFLPPVK</sequence>
<organism>
    <name type="scientific">Prototheca wickerhamii</name>
    <dbReference type="NCBI Taxonomy" id="3111"/>
    <lineage>
        <taxon>Eukaryota</taxon>
        <taxon>Viridiplantae</taxon>
        <taxon>Chlorophyta</taxon>
        <taxon>core chlorophytes</taxon>
        <taxon>Trebouxiophyceae</taxon>
        <taxon>Chlorellales</taxon>
        <taxon>Chlorellaceae</taxon>
        <taxon>Prototheca</taxon>
    </lineage>
</organism>
<feature type="chain" id="PRO_0000238436" description="ATP synthase subunit alpha, plastid">
    <location>
        <begin position="1"/>
        <end position="506"/>
    </location>
</feature>
<feature type="binding site" evidence="2">
    <location>
        <begin position="170"/>
        <end position="177"/>
    </location>
    <ligand>
        <name>ATP</name>
        <dbReference type="ChEBI" id="CHEBI:30616"/>
    </ligand>
</feature>
<feature type="site" description="Required for activity" evidence="2">
    <location>
        <position position="363"/>
    </location>
</feature>
<gene>
    <name evidence="2" type="primary">atpA</name>
</gene>
<proteinExistence type="inferred from homology"/>
<protein>
    <recommendedName>
        <fullName evidence="2">ATP synthase subunit alpha, plastid</fullName>
        <ecNumber evidence="2">7.1.2.2</ecNumber>
    </recommendedName>
    <alternativeName>
        <fullName evidence="2">ATP synthase F1 sector subunit alpha</fullName>
    </alternativeName>
    <alternativeName>
        <fullName evidence="2">F-ATPase subunit alpha</fullName>
    </alternativeName>
</protein>
<name>ATPA_PROWI</name>
<accession>O99015</accession>
<keyword id="KW-0066">ATP synthesis</keyword>
<keyword id="KW-0067">ATP-binding</keyword>
<keyword id="KW-0139">CF(1)</keyword>
<keyword id="KW-0375">Hydrogen ion transport</keyword>
<keyword id="KW-0406">Ion transport</keyword>
<keyword id="KW-0472">Membrane</keyword>
<keyword id="KW-0547">Nucleotide-binding</keyword>
<keyword id="KW-0934">Plastid</keyword>
<keyword id="KW-1278">Translocase</keyword>
<keyword id="KW-0813">Transport</keyword>
<reference key="1">
    <citation type="journal article" date="2002" name="Mol. Genet. Genomics">
        <title>The genes encoding subunits of ATP synthase are conserved in the reduced plastid genome of the heterotrophic alga Prototheca wickerhamii.</title>
        <authorList>
            <person name="Knauf U."/>
            <person name="Hachtel W."/>
        </authorList>
    </citation>
    <scope>NUCLEOTIDE SEQUENCE [GENOMIC DNA]</scope>
    <source>
        <strain>263-11</strain>
    </source>
</reference>
<dbReference type="EC" id="7.1.2.2" evidence="2"/>
<dbReference type="EMBL" id="AJ236874">
    <property type="protein sequence ID" value="CAB38453.1"/>
    <property type="molecule type" value="Genomic_DNA"/>
</dbReference>
<dbReference type="SMR" id="O99015"/>
<dbReference type="GO" id="GO:0042170">
    <property type="term" value="C:plastid membrane"/>
    <property type="evidence" value="ECO:0007669"/>
    <property type="project" value="UniProtKB-SubCell"/>
</dbReference>
<dbReference type="GO" id="GO:0045259">
    <property type="term" value="C:proton-transporting ATP synthase complex"/>
    <property type="evidence" value="ECO:0007669"/>
    <property type="project" value="UniProtKB-KW"/>
</dbReference>
<dbReference type="GO" id="GO:0043531">
    <property type="term" value="F:ADP binding"/>
    <property type="evidence" value="ECO:0007669"/>
    <property type="project" value="TreeGrafter"/>
</dbReference>
<dbReference type="GO" id="GO:0005524">
    <property type="term" value="F:ATP binding"/>
    <property type="evidence" value="ECO:0007669"/>
    <property type="project" value="UniProtKB-KW"/>
</dbReference>
<dbReference type="GO" id="GO:0046933">
    <property type="term" value="F:proton-transporting ATP synthase activity, rotational mechanism"/>
    <property type="evidence" value="ECO:0007669"/>
    <property type="project" value="InterPro"/>
</dbReference>
<dbReference type="CDD" id="cd18113">
    <property type="entry name" value="ATP-synt_F1_alpha_C"/>
    <property type="match status" value="1"/>
</dbReference>
<dbReference type="CDD" id="cd18116">
    <property type="entry name" value="ATP-synt_F1_alpha_N"/>
    <property type="match status" value="1"/>
</dbReference>
<dbReference type="CDD" id="cd01132">
    <property type="entry name" value="F1-ATPase_alpha_CD"/>
    <property type="match status" value="1"/>
</dbReference>
<dbReference type="FunFam" id="1.20.150.20:FF:000001">
    <property type="entry name" value="ATP synthase subunit alpha"/>
    <property type="match status" value="1"/>
</dbReference>
<dbReference type="FunFam" id="2.40.30.20:FF:000001">
    <property type="entry name" value="ATP synthase subunit alpha"/>
    <property type="match status" value="1"/>
</dbReference>
<dbReference type="FunFam" id="3.40.50.300:FF:000002">
    <property type="entry name" value="ATP synthase subunit alpha"/>
    <property type="match status" value="1"/>
</dbReference>
<dbReference type="Gene3D" id="2.40.30.20">
    <property type="match status" value="1"/>
</dbReference>
<dbReference type="Gene3D" id="1.20.150.20">
    <property type="entry name" value="ATP synthase alpha/beta chain, C-terminal domain"/>
    <property type="match status" value="1"/>
</dbReference>
<dbReference type="Gene3D" id="3.40.50.300">
    <property type="entry name" value="P-loop containing nucleotide triphosphate hydrolases"/>
    <property type="match status" value="1"/>
</dbReference>
<dbReference type="HAMAP" id="MF_01346">
    <property type="entry name" value="ATP_synth_alpha_bact"/>
    <property type="match status" value="1"/>
</dbReference>
<dbReference type="InterPro" id="IPR023366">
    <property type="entry name" value="ATP_synth_asu-like_sf"/>
</dbReference>
<dbReference type="InterPro" id="IPR000793">
    <property type="entry name" value="ATP_synth_asu_C"/>
</dbReference>
<dbReference type="InterPro" id="IPR038376">
    <property type="entry name" value="ATP_synth_asu_C_sf"/>
</dbReference>
<dbReference type="InterPro" id="IPR033732">
    <property type="entry name" value="ATP_synth_F1_a_nt-bd_dom"/>
</dbReference>
<dbReference type="InterPro" id="IPR005294">
    <property type="entry name" value="ATP_synth_F1_asu"/>
</dbReference>
<dbReference type="InterPro" id="IPR020003">
    <property type="entry name" value="ATPase_a/bsu_AS"/>
</dbReference>
<dbReference type="InterPro" id="IPR004100">
    <property type="entry name" value="ATPase_F1/V1/A1_a/bsu_N"/>
</dbReference>
<dbReference type="InterPro" id="IPR036121">
    <property type="entry name" value="ATPase_F1/V1/A1_a/bsu_N_sf"/>
</dbReference>
<dbReference type="InterPro" id="IPR000194">
    <property type="entry name" value="ATPase_F1/V1/A1_a/bsu_nucl-bd"/>
</dbReference>
<dbReference type="InterPro" id="IPR027417">
    <property type="entry name" value="P-loop_NTPase"/>
</dbReference>
<dbReference type="NCBIfam" id="TIGR00962">
    <property type="entry name" value="atpA"/>
    <property type="match status" value="1"/>
</dbReference>
<dbReference type="NCBIfam" id="NF009884">
    <property type="entry name" value="PRK13343.1"/>
    <property type="match status" value="1"/>
</dbReference>
<dbReference type="PANTHER" id="PTHR48082">
    <property type="entry name" value="ATP SYNTHASE SUBUNIT ALPHA, MITOCHONDRIAL"/>
    <property type="match status" value="1"/>
</dbReference>
<dbReference type="PANTHER" id="PTHR48082:SF2">
    <property type="entry name" value="ATP SYNTHASE SUBUNIT ALPHA, MITOCHONDRIAL"/>
    <property type="match status" value="1"/>
</dbReference>
<dbReference type="Pfam" id="PF00006">
    <property type="entry name" value="ATP-synt_ab"/>
    <property type="match status" value="1"/>
</dbReference>
<dbReference type="Pfam" id="PF00306">
    <property type="entry name" value="ATP-synt_ab_C"/>
    <property type="match status" value="1"/>
</dbReference>
<dbReference type="Pfam" id="PF02874">
    <property type="entry name" value="ATP-synt_ab_N"/>
    <property type="match status" value="1"/>
</dbReference>
<dbReference type="PIRSF" id="PIRSF039088">
    <property type="entry name" value="F_ATPase_subunit_alpha"/>
    <property type="match status" value="1"/>
</dbReference>
<dbReference type="SUPFAM" id="SSF47917">
    <property type="entry name" value="C-terminal domain of alpha and beta subunits of F1 ATP synthase"/>
    <property type="match status" value="1"/>
</dbReference>
<dbReference type="SUPFAM" id="SSF50615">
    <property type="entry name" value="N-terminal domain of alpha and beta subunits of F1 ATP synthase"/>
    <property type="match status" value="1"/>
</dbReference>
<dbReference type="SUPFAM" id="SSF52540">
    <property type="entry name" value="P-loop containing nucleoside triphosphate hydrolases"/>
    <property type="match status" value="1"/>
</dbReference>
<dbReference type="PROSITE" id="PS00152">
    <property type="entry name" value="ATPASE_ALPHA_BETA"/>
    <property type="match status" value="1"/>
</dbReference>
<geneLocation type="non-photosynthetic plastid"/>
<evidence type="ECO:0000250" key="1"/>
<evidence type="ECO:0000255" key="2">
    <source>
        <dbReference type="HAMAP-Rule" id="MF_01346"/>
    </source>
</evidence>
<comment type="function">
    <text evidence="2">Produces ATP from ADP in the presence of a proton gradient across the membrane. The alpha chain is a regulatory subunit.</text>
</comment>
<comment type="catalytic activity">
    <reaction evidence="2">
        <text>ATP + H2O + 4 H(+)(in) = ADP + phosphate + 5 H(+)(out)</text>
        <dbReference type="Rhea" id="RHEA:57720"/>
        <dbReference type="ChEBI" id="CHEBI:15377"/>
        <dbReference type="ChEBI" id="CHEBI:15378"/>
        <dbReference type="ChEBI" id="CHEBI:30616"/>
        <dbReference type="ChEBI" id="CHEBI:43474"/>
        <dbReference type="ChEBI" id="CHEBI:456216"/>
        <dbReference type="EC" id="7.1.2.2"/>
    </reaction>
</comment>
<comment type="subunit">
    <text evidence="2">F-type ATPases have 2 components, CF(1) - the catalytic core - and CF(0) - the membrane proton channel. CF(1) has five subunits: alpha(3), beta(3), gamma(1), delta(1), epsilon(1). CF(0) has four main subunits: a, b, b' and c.</text>
</comment>
<comment type="subcellular location">
    <subcellularLocation>
        <location evidence="1">Plastid membrane</location>
        <topology evidence="2">Peripheral membrane protein</topology>
    </subcellularLocation>
</comment>
<comment type="similarity">
    <text evidence="2">Belongs to the ATPase alpha/beta chains family.</text>
</comment>